<protein>
    <recommendedName>
        <fullName>Apolipoprotein E</fullName>
        <shortName>Apo-E</shortName>
    </recommendedName>
</protein>
<reference key="1">
    <citation type="journal article" date="1987" name="Atherosclerosis">
        <title>Isolation and characterization of a full-length rabbit apolipoprotein E cDNA.</title>
        <authorList>
            <person name="Hao Q.L."/>
            <person name="Yamin T.T."/>
            <person name="Pan T.C."/>
            <person name="Chen S.L."/>
            <person name="Chen B.S."/>
            <person name="Kroon P.A."/>
            <person name="Chao Y.S."/>
        </authorList>
    </citation>
    <scope>NUCLEOTIDE SEQUENCE [MRNA]</scope>
</reference>
<comment type="function">
    <text evidence="1">APOE is an apolipoprotein, a protein associating with lipid particles, that mainly functions in lipoprotein-mediated lipid transport between organs via the plasma and interstitial fluids. APOE is a core component of plasma lipoproteins and is involved in their production, conversion and clearance. Apolipoproteins are amphipathic molecules that interact both with lipids of the lipoprotein particle core and the aqueous environment of the plasma. As such, APOE associates with chylomicrons, chylomicron remnants, very low density lipoproteins (VLDL) and intermediate density lipoproteins (IDL) but shows a preferential binding to high-density lipoproteins (HDL). It also binds a wide range of cellular receptors including the LDL receptor/LDLR and the very low-density lipoprotein receptor/VLDLR that mediate the cellular uptake of the APOE-containing lipoprotein particles. Finally, APOE also has a heparin-binding activity and binds heparan-sulfate proteoglycans on the surface of cells, a property that supports the capture and the receptor-mediated uptake of APOE-containing lipoproteins by cells.</text>
</comment>
<comment type="subunit">
    <text evidence="1">Homotetramer. May interact with ABCA1; functionally associated with ABCA1 in the biogenesis of HDLs. May interact with APP/A4 amyloid-beta peptide; the interaction is extremely stable in vitro but its physiological significance is unclear. May interact with MAPT. May interact with MAP2. In the cerebrospinal fluid, interacts with secreted SORL1. Interacts with PMEL; this allows the loading of PMEL luminal fragment on ILVs to induce fibril nucleation.</text>
</comment>
<comment type="subcellular location">
    <subcellularLocation>
        <location evidence="1">Secreted</location>
    </subcellularLocation>
    <subcellularLocation>
        <location evidence="1">Secreted</location>
        <location evidence="1">Extracellular space</location>
    </subcellularLocation>
    <subcellularLocation>
        <location evidence="1">Secreted</location>
        <location evidence="1">Extracellular space</location>
        <location evidence="1">Extracellular matrix</location>
    </subcellularLocation>
    <subcellularLocation>
        <location evidence="1">Extracellular vesicle</location>
    </subcellularLocation>
    <subcellularLocation>
        <location evidence="1">Endosome</location>
        <location evidence="1">Multivesicular body</location>
    </subcellularLocation>
    <text evidence="1">In the plasma, APOE is associated with chylomicrons, chylomicrons remnants, VLDL, LDL and HDL lipoproteins. Lipid poor oligomeric APOE is associated with the extracellular matrix in a calcium- and heparan-sulfate proteoglycans-dependent manner. Lipidation induces the release from the extracellular matrix. Colocalizes with CD63 and PMEL at exosomes and in intraluminal vesicles within multivesicular endosomes.</text>
</comment>
<comment type="PTM">
    <text evidence="1">APOE exists as multiple glycosylated and sialylated glycoforms within cells and in plasma. The extent of glycosylation and sialylation are tissue and context specific.</text>
</comment>
<comment type="PTM">
    <text evidence="1">Glycated in plasma VLDL.</text>
</comment>
<comment type="PTM">
    <text evidence="1">Phosphorylated by FAM20C in the extracellular medium.</text>
</comment>
<comment type="similarity">
    <text evidence="5">Belongs to the apolipoprotein A1/A4/E family.</text>
</comment>
<sequence length="311" mass="35497">MKVWWAVLAAAILAGCRAQTEQEVEVPEQARWKAGQPWELALGRFWDYLRWVQSLSDQVQEELLSSQVTQELTMLMEETMKEVKAYKSELEEQLSPMAQEHRARLSKELQVAGALEADMEDVCNRLAQYRGEAQAMLGQSTEELARAFSSHLRKLRKRLLRDAEDLQKRMAVYGAGAREGAERGVSAVRERLGSRLERGRLRVATVGTLAGRPLRERAQAWGERLRGHLEEVGSRARDRLNEVREQVEEVRVKVEEQAPQMRLQAEAFQARLKSWFEPLVEDMQRQWAGLVEKLQAAMPSKAPAAAPIENQ</sequence>
<gene>
    <name type="primary">APOE</name>
</gene>
<accession>P18287</accession>
<proteinExistence type="evidence at transcript level"/>
<organism>
    <name type="scientific">Oryctolagus cuniculus</name>
    <name type="common">Rabbit</name>
    <dbReference type="NCBI Taxonomy" id="9986"/>
    <lineage>
        <taxon>Eukaryota</taxon>
        <taxon>Metazoa</taxon>
        <taxon>Chordata</taxon>
        <taxon>Craniata</taxon>
        <taxon>Vertebrata</taxon>
        <taxon>Euteleostomi</taxon>
        <taxon>Mammalia</taxon>
        <taxon>Eutheria</taxon>
        <taxon>Euarchontoglires</taxon>
        <taxon>Glires</taxon>
        <taxon>Lagomorpha</taxon>
        <taxon>Leporidae</taxon>
        <taxon>Oryctolagus</taxon>
    </lineage>
</organism>
<name>APOE_RABIT</name>
<evidence type="ECO:0000250" key="1">
    <source>
        <dbReference type="UniProtKB" id="P02649"/>
    </source>
</evidence>
<evidence type="ECO:0000250" key="2">
    <source>
        <dbReference type="UniProtKB" id="P08226"/>
    </source>
</evidence>
<evidence type="ECO:0000250" key="3">
    <source>
        <dbReference type="UniProtKB" id="Q03247"/>
    </source>
</evidence>
<evidence type="ECO:0000255" key="4"/>
<evidence type="ECO:0000305" key="5"/>
<dbReference type="EMBL" id="M36603">
    <property type="protein sequence ID" value="AAA31164.1"/>
    <property type="molecule type" value="mRNA"/>
</dbReference>
<dbReference type="PIR" id="A45951">
    <property type="entry name" value="A45951"/>
</dbReference>
<dbReference type="RefSeq" id="NP_001076112.1">
    <property type="nucleotide sequence ID" value="NM_001082643.1"/>
</dbReference>
<dbReference type="SMR" id="P18287"/>
<dbReference type="FunCoup" id="P18287">
    <property type="interactions" value="43"/>
</dbReference>
<dbReference type="GlyCosmos" id="P18287">
    <property type="glycosylation" value="1 site, No reported glycans"/>
</dbReference>
<dbReference type="GeneID" id="100009337"/>
<dbReference type="CTD" id="348"/>
<dbReference type="InParanoid" id="P18287"/>
<dbReference type="OrthoDB" id="9048614at2759"/>
<dbReference type="Proteomes" id="UP000001811">
    <property type="component" value="Unplaced"/>
</dbReference>
<dbReference type="GO" id="GO:0042627">
    <property type="term" value="C:chylomicron"/>
    <property type="evidence" value="ECO:0007669"/>
    <property type="project" value="UniProtKB-KW"/>
</dbReference>
<dbReference type="GO" id="GO:0070062">
    <property type="term" value="C:extracellular exosome"/>
    <property type="evidence" value="ECO:0000250"/>
    <property type="project" value="UniProtKB"/>
</dbReference>
<dbReference type="GO" id="GO:0031012">
    <property type="term" value="C:extracellular matrix"/>
    <property type="evidence" value="ECO:0000250"/>
    <property type="project" value="UniProtKB"/>
</dbReference>
<dbReference type="GO" id="GO:0034364">
    <property type="term" value="C:high-density lipoprotein particle"/>
    <property type="evidence" value="ECO:0000314"/>
    <property type="project" value="ARUK-UCL"/>
</dbReference>
<dbReference type="GO" id="GO:0034363">
    <property type="term" value="C:intermediate-density lipoprotein particle"/>
    <property type="evidence" value="ECO:0000314"/>
    <property type="project" value="ARUK-UCL"/>
</dbReference>
<dbReference type="GO" id="GO:0034362">
    <property type="term" value="C:low-density lipoprotein particle"/>
    <property type="evidence" value="ECO:0000314"/>
    <property type="project" value="ARUK-UCL"/>
</dbReference>
<dbReference type="GO" id="GO:0097487">
    <property type="term" value="C:multivesicular body, internal vesicle"/>
    <property type="evidence" value="ECO:0000250"/>
    <property type="project" value="UniProtKB"/>
</dbReference>
<dbReference type="GO" id="GO:0034361">
    <property type="term" value="C:very-low-density lipoprotein particle"/>
    <property type="evidence" value="ECO:0000314"/>
    <property type="project" value="ARUK-UCL"/>
</dbReference>
<dbReference type="GO" id="GO:0001540">
    <property type="term" value="F:amyloid-beta binding"/>
    <property type="evidence" value="ECO:0000353"/>
    <property type="project" value="ARUK-UCL"/>
</dbReference>
<dbReference type="GO" id="GO:0120020">
    <property type="term" value="F:cholesterol transfer activity"/>
    <property type="evidence" value="ECO:0007669"/>
    <property type="project" value="TreeGrafter"/>
</dbReference>
<dbReference type="GO" id="GO:0043395">
    <property type="term" value="F:heparan sulfate proteoglycan binding"/>
    <property type="evidence" value="ECO:0000250"/>
    <property type="project" value="UniProtKB"/>
</dbReference>
<dbReference type="GO" id="GO:0008201">
    <property type="term" value="F:heparin binding"/>
    <property type="evidence" value="ECO:0000250"/>
    <property type="project" value="UniProtKB"/>
</dbReference>
<dbReference type="GO" id="GO:0042802">
    <property type="term" value="F:identical protein binding"/>
    <property type="evidence" value="ECO:0000250"/>
    <property type="project" value="UniProtKB"/>
</dbReference>
<dbReference type="GO" id="GO:0050750">
    <property type="term" value="F:low-density lipoprotein particle receptor binding"/>
    <property type="evidence" value="ECO:0000250"/>
    <property type="project" value="UniProtKB"/>
</dbReference>
<dbReference type="GO" id="GO:0042277">
    <property type="term" value="F:peptide binding"/>
    <property type="evidence" value="ECO:0000353"/>
    <property type="project" value="ARUK-UCL"/>
</dbReference>
<dbReference type="GO" id="GO:0060228">
    <property type="term" value="F:phosphatidylcholine-sterol O-acyltransferase activator activity"/>
    <property type="evidence" value="ECO:0007669"/>
    <property type="project" value="TreeGrafter"/>
</dbReference>
<dbReference type="GO" id="GO:0005543">
    <property type="term" value="F:phospholipid binding"/>
    <property type="evidence" value="ECO:0007669"/>
    <property type="project" value="TreeGrafter"/>
</dbReference>
<dbReference type="GO" id="GO:0042803">
    <property type="term" value="F:protein homodimerization activity"/>
    <property type="evidence" value="ECO:0000353"/>
    <property type="project" value="ARUK-UCL"/>
</dbReference>
<dbReference type="GO" id="GO:0055090">
    <property type="term" value="P:acylglycerol homeostasis"/>
    <property type="evidence" value="ECO:0007669"/>
    <property type="project" value="TreeGrafter"/>
</dbReference>
<dbReference type="GO" id="GO:0033344">
    <property type="term" value="P:cholesterol efflux"/>
    <property type="evidence" value="ECO:0000250"/>
    <property type="project" value="UniProtKB"/>
</dbReference>
<dbReference type="GO" id="GO:0008203">
    <property type="term" value="P:cholesterol metabolic process"/>
    <property type="evidence" value="ECO:0007669"/>
    <property type="project" value="TreeGrafter"/>
</dbReference>
<dbReference type="GO" id="GO:0034382">
    <property type="term" value="P:chylomicron remnant clearance"/>
    <property type="evidence" value="ECO:0000250"/>
    <property type="project" value="UniProtKB"/>
</dbReference>
<dbReference type="GO" id="GO:0034380">
    <property type="term" value="P:high-density lipoprotein particle assembly"/>
    <property type="evidence" value="ECO:0000250"/>
    <property type="project" value="UniProtKB"/>
</dbReference>
<dbReference type="GO" id="GO:0071831">
    <property type="term" value="P:intermediate-density lipoprotein particle clearance"/>
    <property type="evidence" value="ECO:0000250"/>
    <property type="project" value="UniProtKB"/>
</dbReference>
<dbReference type="GO" id="GO:0042158">
    <property type="term" value="P:lipoprotein biosynthetic process"/>
    <property type="evidence" value="ECO:0000250"/>
    <property type="project" value="UniProtKB"/>
</dbReference>
<dbReference type="GO" id="GO:0032438">
    <property type="term" value="P:melanosome organization"/>
    <property type="evidence" value="ECO:0000250"/>
    <property type="project" value="UniProtKB"/>
</dbReference>
<dbReference type="GO" id="GO:0033700">
    <property type="term" value="P:phospholipid efflux"/>
    <property type="evidence" value="ECO:0007669"/>
    <property type="project" value="TreeGrafter"/>
</dbReference>
<dbReference type="GO" id="GO:0071830">
    <property type="term" value="P:triglyceride-rich lipoprotein particle clearance"/>
    <property type="evidence" value="ECO:0000250"/>
    <property type="project" value="UniProtKB"/>
</dbReference>
<dbReference type="GO" id="GO:0034447">
    <property type="term" value="P:very-low-density lipoprotein particle clearance"/>
    <property type="evidence" value="ECO:0000250"/>
    <property type="project" value="UniProtKB"/>
</dbReference>
<dbReference type="FunFam" id="1.20.120.20:FF:000002">
    <property type="entry name" value="Apolipoprotein E"/>
    <property type="match status" value="1"/>
</dbReference>
<dbReference type="FunFam" id="1.20.120.20:FF:000003">
    <property type="entry name" value="Apolipoprotein E"/>
    <property type="match status" value="1"/>
</dbReference>
<dbReference type="Gene3D" id="1.20.120.20">
    <property type="entry name" value="Apolipoprotein"/>
    <property type="match status" value="2"/>
</dbReference>
<dbReference type="InterPro" id="IPR000074">
    <property type="entry name" value="ApoA_E"/>
</dbReference>
<dbReference type="InterPro" id="IPR050163">
    <property type="entry name" value="Apolipoprotein_A1/A4/E"/>
</dbReference>
<dbReference type="PANTHER" id="PTHR18976">
    <property type="entry name" value="APOLIPOPROTEIN"/>
    <property type="match status" value="1"/>
</dbReference>
<dbReference type="PANTHER" id="PTHR18976:SF2">
    <property type="entry name" value="APOLIPOPROTEIN E"/>
    <property type="match status" value="1"/>
</dbReference>
<dbReference type="Pfam" id="PF01442">
    <property type="entry name" value="Apolipoprotein"/>
    <property type="match status" value="1"/>
</dbReference>
<dbReference type="SUPFAM" id="SSF58113">
    <property type="entry name" value="Apolipoprotein A-I"/>
    <property type="match status" value="1"/>
</dbReference>
<keyword id="KW-0162">Chylomicron</keyword>
<keyword id="KW-0967">Endosome</keyword>
<keyword id="KW-0272">Extracellular matrix</keyword>
<keyword id="KW-0325">Glycoprotein</keyword>
<keyword id="KW-0345">HDL</keyword>
<keyword id="KW-0358">Heparin-binding</keyword>
<keyword id="KW-0445">Lipid transport</keyword>
<keyword id="KW-0446">Lipid-binding</keyword>
<keyword id="KW-0558">Oxidation</keyword>
<keyword id="KW-0597">Phosphoprotein</keyword>
<keyword id="KW-1185">Reference proteome</keyword>
<keyword id="KW-0677">Repeat</keyword>
<keyword id="KW-0964">Secreted</keyword>
<keyword id="KW-0732">Signal</keyword>
<keyword id="KW-0813">Transport</keyword>
<keyword id="KW-0850">VLDL</keyword>
<feature type="signal peptide" evidence="4">
    <location>
        <begin position="1"/>
        <end position="18"/>
    </location>
</feature>
<feature type="chain" id="PRO_0000001995" description="Apolipoprotein E">
    <location>
        <begin position="19"/>
        <end position="311"/>
    </location>
</feature>
<feature type="repeat" description="1">
    <location>
        <begin position="74"/>
        <end position="95"/>
    </location>
</feature>
<feature type="repeat" description="2">
    <location>
        <begin position="96"/>
        <end position="116"/>
    </location>
</feature>
<feature type="repeat" description="3">
    <location>
        <begin position="117"/>
        <end position="138"/>
    </location>
</feature>
<feature type="repeat" description="4">
    <location>
        <begin position="139"/>
        <end position="160"/>
    </location>
</feature>
<feature type="repeat" description="5">
    <location>
        <begin position="161"/>
        <end position="182"/>
    </location>
</feature>
<feature type="repeat" description="6">
    <location>
        <begin position="183"/>
        <end position="204"/>
    </location>
</feature>
<feature type="repeat" description="7">
    <location>
        <begin position="205"/>
        <end position="226"/>
    </location>
</feature>
<feature type="repeat" description="8">
    <location>
        <begin position="227"/>
        <end position="248"/>
    </location>
</feature>
<feature type="region of interest" description="8 X 22 AA approximate tandem repeats">
    <location>
        <begin position="74"/>
        <end position="248"/>
    </location>
</feature>
<feature type="region of interest" description="LDL and other lipoprotein receptors binding" evidence="1">
    <location>
        <begin position="151"/>
        <end position="161"/>
    </location>
</feature>
<feature type="region of interest" description="Lipid-binding and lipoprotein association" evidence="1">
    <location>
        <begin position="203"/>
        <end position="283"/>
    </location>
</feature>
<feature type="region of interest" description="Homooligomerization" evidence="1">
    <location>
        <begin position="259"/>
        <end position="311"/>
    </location>
</feature>
<feature type="region of interest" description="Specificity for association with VLDL" evidence="1">
    <location>
        <begin position="271"/>
        <end position="283"/>
    </location>
</feature>
<feature type="binding site" evidence="1">
    <location>
        <begin position="155"/>
        <end position="158"/>
    </location>
    <ligand>
        <name>heparin</name>
        <dbReference type="ChEBI" id="CHEBI:28304"/>
    </ligand>
</feature>
<feature type="binding site" evidence="1">
    <location>
        <begin position="222"/>
        <end position="229"/>
    </location>
    <ligand>
        <name>heparin</name>
        <dbReference type="ChEBI" id="CHEBI:28304"/>
    </ligand>
</feature>
<feature type="modified residue" description="Methionine sulfoxide" evidence="2">
    <location>
        <position position="136"/>
    </location>
</feature>
<feature type="modified residue" description="Phosphoserine" evidence="1">
    <location>
        <position position="140"/>
    </location>
</feature>
<feature type="glycosylation site" description="O-linked (GalNAc...) threonine" evidence="3">
    <location>
        <position position="205"/>
    </location>
</feature>